<protein>
    <recommendedName>
        <fullName evidence="1">Orotidine 5'-phosphate decarboxylase</fullName>
        <ecNumber evidence="1">4.1.1.23</ecNumber>
    </recommendedName>
    <alternativeName>
        <fullName evidence="1">OMP decarboxylase</fullName>
        <shortName evidence="1">OMPDCase</shortName>
        <shortName evidence="1">OMPdecase</shortName>
    </alternativeName>
</protein>
<reference key="1">
    <citation type="journal article" date="2003" name="Proc. Natl. Acad. Sci. U.S.A.">
        <title>Complete genome sequence of the marine planctomycete Pirellula sp. strain 1.</title>
        <authorList>
            <person name="Gloeckner F.O."/>
            <person name="Kube M."/>
            <person name="Bauer M."/>
            <person name="Teeling H."/>
            <person name="Lombardot T."/>
            <person name="Ludwig W."/>
            <person name="Gade D."/>
            <person name="Beck A."/>
            <person name="Borzym K."/>
            <person name="Heitmann K."/>
            <person name="Rabus R."/>
            <person name="Schlesner H."/>
            <person name="Amann R."/>
            <person name="Reinhardt R."/>
        </authorList>
    </citation>
    <scope>NUCLEOTIDE SEQUENCE [LARGE SCALE GENOMIC DNA]</scope>
    <source>
        <strain>DSM 10527 / NCIMB 13988 / SH1</strain>
    </source>
</reference>
<sequence length="302" mass="31904">MMTFATQLNAAILRTGSVTCVGLDPRLEQLPKPLRDSVSEKRKDSVAAAYTQFCCEIIDAVAGLVPCVKPQAAFFEQLGPAGMVSLGEVISHANQAGLIVITDGKRNDIGSTATAYADAYLGSAEPDRSPWGSDALTVSPYLGRDSLEPFVEVCDRRAAGIFVLVKTSNPGGGYLQDLSVDGKTIYQSVAELVTELNKSRLDADGYGPVGAVVGATYPEQLVELRKAMPHSILLVPGFGAQGGSADDVRAAMDANGAGAVVNSSRHIVFAHKREEFSVAADESNWQDAVRAATIQMNEQLKG</sequence>
<dbReference type="EC" id="4.1.1.23" evidence="1"/>
<dbReference type="EMBL" id="BX294155">
    <property type="protein sequence ID" value="CAD77710.1"/>
    <property type="molecule type" value="Genomic_DNA"/>
</dbReference>
<dbReference type="RefSeq" id="NP_870633.1">
    <property type="nucleotide sequence ID" value="NC_005027.1"/>
</dbReference>
<dbReference type="SMR" id="Q7UIA4"/>
<dbReference type="STRING" id="243090.RB12661"/>
<dbReference type="EnsemblBacteria" id="CAD77710">
    <property type="protein sequence ID" value="CAD77710"/>
    <property type="gene ID" value="RB12661"/>
</dbReference>
<dbReference type="KEGG" id="rba:RB12661"/>
<dbReference type="PATRIC" id="fig|243090.15.peg.6141"/>
<dbReference type="eggNOG" id="COG0284">
    <property type="taxonomic scope" value="Bacteria"/>
</dbReference>
<dbReference type="HOGENOM" id="CLU_060704_1_1_0"/>
<dbReference type="InParanoid" id="Q7UIA4"/>
<dbReference type="OrthoDB" id="9808470at2"/>
<dbReference type="UniPathway" id="UPA00070">
    <property type="reaction ID" value="UER00120"/>
</dbReference>
<dbReference type="Proteomes" id="UP000001025">
    <property type="component" value="Chromosome"/>
</dbReference>
<dbReference type="GO" id="GO:0004590">
    <property type="term" value="F:orotidine-5'-phosphate decarboxylase activity"/>
    <property type="evidence" value="ECO:0007669"/>
    <property type="project" value="UniProtKB-UniRule"/>
</dbReference>
<dbReference type="GO" id="GO:0006207">
    <property type="term" value="P:'de novo' pyrimidine nucleobase biosynthetic process"/>
    <property type="evidence" value="ECO:0007669"/>
    <property type="project" value="InterPro"/>
</dbReference>
<dbReference type="GO" id="GO:0044205">
    <property type="term" value="P:'de novo' UMP biosynthetic process"/>
    <property type="evidence" value="ECO:0007669"/>
    <property type="project" value="UniProtKB-UniRule"/>
</dbReference>
<dbReference type="CDD" id="cd04725">
    <property type="entry name" value="OMP_decarboxylase_like"/>
    <property type="match status" value="1"/>
</dbReference>
<dbReference type="FunFam" id="3.20.20.70:FF:000246">
    <property type="entry name" value="Orotidine 5'-phosphate decarboxylase"/>
    <property type="match status" value="1"/>
</dbReference>
<dbReference type="Gene3D" id="3.20.20.70">
    <property type="entry name" value="Aldolase class I"/>
    <property type="match status" value="1"/>
</dbReference>
<dbReference type="HAMAP" id="MF_01215">
    <property type="entry name" value="OMPdecase_type2"/>
    <property type="match status" value="1"/>
</dbReference>
<dbReference type="InterPro" id="IPR013785">
    <property type="entry name" value="Aldolase_TIM"/>
</dbReference>
<dbReference type="InterPro" id="IPR018089">
    <property type="entry name" value="OMPdecase_AS"/>
</dbReference>
<dbReference type="InterPro" id="IPR011995">
    <property type="entry name" value="OMPdecase_type-2"/>
</dbReference>
<dbReference type="InterPro" id="IPR001754">
    <property type="entry name" value="OMPdeCOase_dom"/>
</dbReference>
<dbReference type="InterPro" id="IPR011060">
    <property type="entry name" value="RibuloseP-bd_barrel"/>
</dbReference>
<dbReference type="NCBIfam" id="TIGR02127">
    <property type="entry name" value="pyrF_sub2"/>
    <property type="match status" value="1"/>
</dbReference>
<dbReference type="PANTHER" id="PTHR43375">
    <property type="entry name" value="OROTIDINE 5'-PHOSPHATE DECARBOXYLASE"/>
    <property type="match status" value="1"/>
</dbReference>
<dbReference type="PANTHER" id="PTHR43375:SF1">
    <property type="entry name" value="OROTIDINE 5'-PHOSPHATE DECARBOXYLASE"/>
    <property type="match status" value="1"/>
</dbReference>
<dbReference type="Pfam" id="PF00215">
    <property type="entry name" value="OMPdecase"/>
    <property type="match status" value="1"/>
</dbReference>
<dbReference type="SMART" id="SM00934">
    <property type="entry name" value="OMPdecase"/>
    <property type="match status" value="1"/>
</dbReference>
<dbReference type="SUPFAM" id="SSF51366">
    <property type="entry name" value="Ribulose-phoshate binding barrel"/>
    <property type="match status" value="1"/>
</dbReference>
<dbReference type="PROSITE" id="PS00156">
    <property type="entry name" value="OMPDECASE"/>
    <property type="match status" value="1"/>
</dbReference>
<keyword id="KW-0210">Decarboxylase</keyword>
<keyword id="KW-0456">Lyase</keyword>
<keyword id="KW-0665">Pyrimidine biosynthesis</keyword>
<keyword id="KW-1185">Reference proteome</keyword>
<proteinExistence type="inferred from homology"/>
<organism>
    <name type="scientific">Rhodopirellula baltica (strain DSM 10527 / NCIMB 13988 / SH1)</name>
    <dbReference type="NCBI Taxonomy" id="243090"/>
    <lineage>
        <taxon>Bacteria</taxon>
        <taxon>Pseudomonadati</taxon>
        <taxon>Planctomycetota</taxon>
        <taxon>Planctomycetia</taxon>
        <taxon>Pirellulales</taxon>
        <taxon>Pirellulaceae</taxon>
        <taxon>Rhodopirellula</taxon>
    </lineage>
</organism>
<name>PYRF_RHOBA</name>
<comment type="catalytic activity">
    <reaction evidence="1">
        <text>orotidine 5'-phosphate + H(+) = UMP + CO2</text>
        <dbReference type="Rhea" id="RHEA:11596"/>
        <dbReference type="ChEBI" id="CHEBI:15378"/>
        <dbReference type="ChEBI" id="CHEBI:16526"/>
        <dbReference type="ChEBI" id="CHEBI:57538"/>
        <dbReference type="ChEBI" id="CHEBI:57865"/>
        <dbReference type="EC" id="4.1.1.23"/>
    </reaction>
</comment>
<comment type="pathway">
    <text evidence="1">Pyrimidine metabolism; UMP biosynthesis via de novo pathway; UMP from orotate: step 2/2.</text>
</comment>
<comment type="similarity">
    <text evidence="1">Belongs to the OMP decarboxylase family. Type 2 subfamily.</text>
</comment>
<evidence type="ECO:0000255" key="1">
    <source>
        <dbReference type="HAMAP-Rule" id="MF_01215"/>
    </source>
</evidence>
<accession>Q7UIA4</accession>
<feature type="chain" id="PRO_0000227023" description="Orotidine 5'-phosphate decarboxylase">
    <location>
        <begin position="1"/>
        <end position="302"/>
    </location>
</feature>
<feature type="active site" description="Proton donor" evidence="1">
    <location>
        <position position="105"/>
    </location>
</feature>
<gene>
    <name evidence="1" type="primary">pyrF</name>
    <name type="ordered locus">RB12661</name>
</gene>